<organism>
    <name type="scientific">Synechococcus sp. (strain RCC307)</name>
    <dbReference type="NCBI Taxonomy" id="316278"/>
    <lineage>
        <taxon>Bacteria</taxon>
        <taxon>Bacillati</taxon>
        <taxon>Cyanobacteriota</taxon>
        <taxon>Cyanophyceae</taxon>
        <taxon>Synechococcales</taxon>
        <taxon>Synechococcaceae</taxon>
        <taxon>Synechococcus</taxon>
    </lineage>
</organism>
<evidence type="ECO:0000255" key="1">
    <source>
        <dbReference type="HAMAP-Rule" id="MF_00355"/>
    </source>
</evidence>
<evidence type="ECO:0000305" key="2"/>
<feature type="chain" id="PRO_0000324080" description="Light-independent protochlorophyllide reductase iron-sulfur ATP-binding protein">
    <location>
        <begin position="1"/>
        <end position="300"/>
    </location>
</feature>
<feature type="binding site" evidence="1">
    <location>
        <begin position="43"/>
        <end position="48"/>
    </location>
    <ligand>
        <name>ATP</name>
        <dbReference type="ChEBI" id="CHEBI:30616"/>
    </ligand>
</feature>
<feature type="binding site" evidence="1">
    <location>
        <position position="47"/>
    </location>
    <ligand>
        <name>Mg(2+)</name>
        <dbReference type="ChEBI" id="CHEBI:18420"/>
    </ligand>
</feature>
<feature type="binding site" evidence="1">
    <location>
        <position position="72"/>
    </location>
    <ligand>
        <name>ATP</name>
        <dbReference type="ChEBI" id="CHEBI:30616"/>
    </ligand>
</feature>
<feature type="binding site" evidence="1">
    <location>
        <position position="128"/>
    </location>
    <ligand>
        <name>[4Fe-4S] cluster</name>
        <dbReference type="ChEBI" id="CHEBI:49883"/>
        <note>ligand shared between dimeric partners</note>
    </ligand>
</feature>
<feature type="binding site" evidence="1">
    <location>
        <position position="162"/>
    </location>
    <ligand>
        <name>[4Fe-4S] cluster</name>
        <dbReference type="ChEBI" id="CHEBI:49883"/>
        <note>ligand shared between dimeric partners</note>
    </ligand>
</feature>
<feature type="binding site" evidence="1">
    <location>
        <begin position="213"/>
        <end position="214"/>
    </location>
    <ligand>
        <name>ATP</name>
        <dbReference type="ChEBI" id="CHEBI:30616"/>
    </ligand>
</feature>
<sequence length="300" mass="32898">MTTTLTPPSSRREDGDGSVQVHQDASLKIEEGALVIAVYGKGGIGKSTTSSNLSAAFSKLGKRVLQIGCDPKHDSTFTLTHKMVPTVIDILEEVDFHSEELQPEDFVFEGFNGVMCVESGGPPAGTGCGGYVTGQTVKLLKEHHLLEDTDVVIFDVLGDVVCGGFAAPLQHANYCLIVTANDFDSIFAMNRIVQAIQAKAKNYKVRLGGVVANRSAETDQIDKFNERTGLRTMAHFRDVDAIRRSRLKKCTIFEMDKDEEGVEAVQNEYLLLAQNMLDHVEPLEAESLKDREIFDLLGFD</sequence>
<comment type="function">
    <text evidence="1">Component of the dark-operative protochlorophyllide reductase (DPOR) that uses Mg-ATP and reduced ferredoxin to reduce ring D of protochlorophyllide (Pchlide) to form chlorophyllide a (Chlide). This reaction is light-independent. The L component serves as a unique electron donor to the NB-component of the complex, and binds Mg-ATP.</text>
</comment>
<comment type="catalytic activity">
    <reaction evidence="1">
        <text>chlorophyllide a + oxidized 2[4Fe-4S]-[ferredoxin] + 2 ADP + 2 phosphate = protochlorophyllide a + reduced 2[4Fe-4S]-[ferredoxin] + 2 ATP + 2 H2O</text>
        <dbReference type="Rhea" id="RHEA:28202"/>
        <dbReference type="Rhea" id="RHEA-COMP:10002"/>
        <dbReference type="Rhea" id="RHEA-COMP:10004"/>
        <dbReference type="ChEBI" id="CHEBI:15377"/>
        <dbReference type="ChEBI" id="CHEBI:30616"/>
        <dbReference type="ChEBI" id="CHEBI:33722"/>
        <dbReference type="ChEBI" id="CHEBI:33723"/>
        <dbReference type="ChEBI" id="CHEBI:43474"/>
        <dbReference type="ChEBI" id="CHEBI:83348"/>
        <dbReference type="ChEBI" id="CHEBI:83350"/>
        <dbReference type="ChEBI" id="CHEBI:456216"/>
        <dbReference type="EC" id="1.3.7.7"/>
    </reaction>
</comment>
<comment type="cofactor">
    <cofactor evidence="1">
        <name>[4Fe-4S] cluster</name>
        <dbReference type="ChEBI" id="CHEBI:49883"/>
    </cofactor>
    <text evidence="1">Binds 1 [4Fe-4S] cluster per dimer.</text>
</comment>
<comment type="pathway">
    <text evidence="1">Porphyrin-containing compound metabolism; chlorophyll biosynthesis (light-independent).</text>
</comment>
<comment type="subunit">
    <text evidence="1">Homodimer. Protochlorophyllide reductase is composed of three subunits; ChlL, ChlN and ChlB.</text>
</comment>
<comment type="similarity">
    <text evidence="1">Belongs to the NifH/BchL/ChlL family.</text>
</comment>
<comment type="sequence caution" evidence="2">
    <conflict type="erroneous initiation">
        <sequence resource="EMBL-CDS" id="CAK28469"/>
    </conflict>
</comment>
<name>CHLL_SYNR3</name>
<keyword id="KW-0004">4Fe-4S</keyword>
<keyword id="KW-0067">ATP-binding</keyword>
<keyword id="KW-0149">Chlorophyll biosynthesis</keyword>
<keyword id="KW-0408">Iron</keyword>
<keyword id="KW-0411">Iron-sulfur</keyword>
<keyword id="KW-0460">Magnesium</keyword>
<keyword id="KW-0479">Metal-binding</keyword>
<keyword id="KW-0547">Nucleotide-binding</keyword>
<keyword id="KW-0560">Oxidoreductase</keyword>
<keyword id="KW-0602">Photosynthesis</keyword>
<keyword id="KW-1185">Reference proteome</keyword>
<dbReference type="EC" id="1.3.7.7" evidence="1"/>
<dbReference type="EMBL" id="CT978603">
    <property type="protein sequence ID" value="CAK28469.1"/>
    <property type="status" value="ALT_INIT"/>
    <property type="molecule type" value="Genomic_DNA"/>
</dbReference>
<dbReference type="SMR" id="A5GUB0"/>
<dbReference type="STRING" id="316278.SynRCC307_1566"/>
<dbReference type="KEGG" id="syr:SynRCC307_1566"/>
<dbReference type="eggNOG" id="COG1348">
    <property type="taxonomic scope" value="Bacteria"/>
</dbReference>
<dbReference type="HOGENOM" id="CLU_059373_2_0_3"/>
<dbReference type="OrthoDB" id="9778641at2"/>
<dbReference type="UniPathway" id="UPA00670"/>
<dbReference type="Proteomes" id="UP000001115">
    <property type="component" value="Chromosome"/>
</dbReference>
<dbReference type="GO" id="GO:0051539">
    <property type="term" value="F:4 iron, 4 sulfur cluster binding"/>
    <property type="evidence" value="ECO:0007669"/>
    <property type="project" value="UniProtKB-UniRule"/>
</dbReference>
<dbReference type="GO" id="GO:0005524">
    <property type="term" value="F:ATP binding"/>
    <property type="evidence" value="ECO:0007669"/>
    <property type="project" value="UniProtKB-UniRule"/>
</dbReference>
<dbReference type="GO" id="GO:0046872">
    <property type="term" value="F:metal ion binding"/>
    <property type="evidence" value="ECO:0007669"/>
    <property type="project" value="UniProtKB-KW"/>
</dbReference>
<dbReference type="GO" id="GO:0016730">
    <property type="term" value="F:oxidoreductase activity, acting on iron-sulfur proteins as donors"/>
    <property type="evidence" value="ECO:0007669"/>
    <property type="project" value="InterPro"/>
</dbReference>
<dbReference type="GO" id="GO:0016636">
    <property type="term" value="F:oxidoreductase activity, acting on the CH-CH group of donors, iron-sulfur protein as acceptor"/>
    <property type="evidence" value="ECO:0007669"/>
    <property type="project" value="UniProtKB-UniRule"/>
</dbReference>
<dbReference type="GO" id="GO:0036068">
    <property type="term" value="P:light-independent chlorophyll biosynthetic process"/>
    <property type="evidence" value="ECO:0007669"/>
    <property type="project" value="UniProtKB-UniRule"/>
</dbReference>
<dbReference type="GO" id="GO:0019685">
    <property type="term" value="P:photosynthesis, dark reaction"/>
    <property type="evidence" value="ECO:0007669"/>
    <property type="project" value="InterPro"/>
</dbReference>
<dbReference type="CDD" id="cd02032">
    <property type="entry name" value="Bchl-like"/>
    <property type="match status" value="1"/>
</dbReference>
<dbReference type="Gene3D" id="3.40.50.300">
    <property type="entry name" value="P-loop containing nucleotide triphosphate hydrolases"/>
    <property type="match status" value="1"/>
</dbReference>
<dbReference type="HAMAP" id="MF_00355">
    <property type="entry name" value="ChlL_BchL"/>
    <property type="match status" value="1"/>
</dbReference>
<dbReference type="InterPro" id="IPR030655">
    <property type="entry name" value="NifH/chlL_CS"/>
</dbReference>
<dbReference type="InterPro" id="IPR000392">
    <property type="entry name" value="NifH/frxC"/>
</dbReference>
<dbReference type="InterPro" id="IPR027417">
    <property type="entry name" value="P-loop_NTPase"/>
</dbReference>
<dbReference type="InterPro" id="IPR005971">
    <property type="entry name" value="Protochlorophyllide_ATP-bd"/>
</dbReference>
<dbReference type="NCBIfam" id="TIGR01281">
    <property type="entry name" value="DPOR_bchL"/>
    <property type="match status" value="1"/>
</dbReference>
<dbReference type="PANTHER" id="PTHR42864">
    <property type="entry name" value="LIGHT-INDEPENDENT PROTOCHLOROPHYLLIDE REDUCTASE IRON-SULFUR ATP-BINDING PROTEIN"/>
    <property type="match status" value="1"/>
</dbReference>
<dbReference type="PANTHER" id="PTHR42864:SF2">
    <property type="entry name" value="LIGHT-INDEPENDENT PROTOCHLOROPHYLLIDE REDUCTASE IRON-SULFUR ATP-BINDING PROTEIN"/>
    <property type="match status" value="1"/>
</dbReference>
<dbReference type="Pfam" id="PF00142">
    <property type="entry name" value="Fer4_NifH"/>
    <property type="match status" value="1"/>
</dbReference>
<dbReference type="PIRSF" id="PIRSF000363">
    <property type="entry name" value="Nitrogenase_iron"/>
    <property type="match status" value="1"/>
</dbReference>
<dbReference type="PRINTS" id="PR00091">
    <property type="entry name" value="NITROGNASEII"/>
</dbReference>
<dbReference type="SUPFAM" id="SSF52540">
    <property type="entry name" value="P-loop containing nucleoside triphosphate hydrolases"/>
    <property type="match status" value="1"/>
</dbReference>
<dbReference type="PROSITE" id="PS00746">
    <property type="entry name" value="NIFH_FRXC_1"/>
    <property type="match status" value="1"/>
</dbReference>
<dbReference type="PROSITE" id="PS00692">
    <property type="entry name" value="NIFH_FRXC_2"/>
    <property type="match status" value="1"/>
</dbReference>
<dbReference type="PROSITE" id="PS51026">
    <property type="entry name" value="NIFH_FRXC_3"/>
    <property type="match status" value="1"/>
</dbReference>
<proteinExistence type="inferred from homology"/>
<protein>
    <recommendedName>
        <fullName evidence="1">Light-independent protochlorophyllide reductase iron-sulfur ATP-binding protein</fullName>
        <shortName evidence="1">DPOR subunit L</shortName>
        <shortName evidence="1">LI-POR subunit L</shortName>
        <ecNumber evidence="1">1.3.7.7</ecNumber>
    </recommendedName>
</protein>
<gene>
    <name evidence="1" type="primary">chlL</name>
    <name type="ordered locus">SynRCC307_1566</name>
</gene>
<reference key="1">
    <citation type="submission" date="2006-05" db="EMBL/GenBank/DDBJ databases">
        <authorList>
            <consortium name="Genoscope"/>
        </authorList>
    </citation>
    <scope>NUCLEOTIDE SEQUENCE [LARGE SCALE GENOMIC DNA]</scope>
    <source>
        <strain>RCC307</strain>
    </source>
</reference>
<accession>A5GUB0</accession>